<name>RL11_SALAR</name>
<evidence type="ECO:0000255" key="1">
    <source>
        <dbReference type="HAMAP-Rule" id="MF_00736"/>
    </source>
</evidence>
<evidence type="ECO:0000305" key="2"/>
<proteinExistence type="inferred from homology"/>
<accession>A9MHF7</accession>
<gene>
    <name evidence="1" type="primary">rplK</name>
    <name type="ordered locus">SARI_03515</name>
</gene>
<comment type="function">
    <text evidence="1">Forms part of the ribosomal stalk which helps the ribosome interact with GTP-bound translation factors.</text>
</comment>
<comment type="subunit">
    <text evidence="1">Part of the ribosomal stalk of the 50S ribosomal subunit. Interacts with L10 and the large rRNA to form the base of the stalk. L10 forms an elongated spine to which L12 dimers bind in a sequential fashion forming a multimeric L10(L12)X complex.</text>
</comment>
<comment type="PTM">
    <text evidence="1">One or more lysine residues are methylated.</text>
</comment>
<comment type="similarity">
    <text evidence="1">Belongs to the universal ribosomal protein uL11 family.</text>
</comment>
<protein>
    <recommendedName>
        <fullName evidence="1">Large ribosomal subunit protein uL11</fullName>
    </recommendedName>
    <alternativeName>
        <fullName evidence="2">50S ribosomal protein L11</fullName>
    </alternativeName>
</protein>
<organism>
    <name type="scientific">Salmonella arizonae (strain ATCC BAA-731 / CDC346-86 / RSK2980)</name>
    <dbReference type="NCBI Taxonomy" id="41514"/>
    <lineage>
        <taxon>Bacteria</taxon>
        <taxon>Pseudomonadati</taxon>
        <taxon>Pseudomonadota</taxon>
        <taxon>Gammaproteobacteria</taxon>
        <taxon>Enterobacterales</taxon>
        <taxon>Enterobacteriaceae</taxon>
        <taxon>Salmonella</taxon>
    </lineage>
</organism>
<keyword id="KW-0488">Methylation</keyword>
<keyword id="KW-1185">Reference proteome</keyword>
<keyword id="KW-0687">Ribonucleoprotein</keyword>
<keyword id="KW-0689">Ribosomal protein</keyword>
<keyword id="KW-0694">RNA-binding</keyword>
<keyword id="KW-0699">rRNA-binding</keyword>
<dbReference type="EMBL" id="CP000880">
    <property type="protein sequence ID" value="ABX23340.1"/>
    <property type="molecule type" value="Genomic_DNA"/>
</dbReference>
<dbReference type="SMR" id="A9MHF7"/>
<dbReference type="STRING" id="41514.SARI_03515"/>
<dbReference type="KEGG" id="ses:SARI_03515"/>
<dbReference type="HOGENOM" id="CLU_074237_2_0_6"/>
<dbReference type="Proteomes" id="UP000002084">
    <property type="component" value="Chromosome"/>
</dbReference>
<dbReference type="GO" id="GO:0022625">
    <property type="term" value="C:cytosolic large ribosomal subunit"/>
    <property type="evidence" value="ECO:0007669"/>
    <property type="project" value="TreeGrafter"/>
</dbReference>
<dbReference type="GO" id="GO:0070180">
    <property type="term" value="F:large ribosomal subunit rRNA binding"/>
    <property type="evidence" value="ECO:0007669"/>
    <property type="project" value="UniProtKB-UniRule"/>
</dbReference>
<dbReference type="GO" id="GO:0003735">
    <property type="term" value="F:structural constituent of ribosome"/>
    <property type="evidence" value="ECO:0007669"/>
    <property type="project" value="InterPro"/>
</dbReference>
<dbReference type="GO" id="GO:0006412">
    <property type="term" value="P:translation"/>
    <property type="evidence" value="ECO:0007669"/>
    <property type="project" value="UniProtKB-UniRule"/>
</dbReference>
<dbReference type="CDD" id="cd00349">
    <property type="entry name" value="Ribosomal_L11"/>
    <property type="match status" value="1"/>
</dbReference>
<dbReference type="FunFam" id="1.10.10.250:FF:000001">
    <property type="entry name" value="50S ribosomal protein L11"/>
    <property type="match status" value="1"/>
</dbReference>
<dbReference type="FunFam" id="3.30.1550.10:FF:000001">
    <property type="entry name" value="50S ribosomal protein L11"/>
    <property type="match status" value="1"/>
</dbReference>
<dbReference type="Gene3D" id="1.10.10.250">
    <property type="entry name" value="Ribosomal protein L11, C-terminal domain"/>
    <property type="match status" value="1"/>
</dbReference>
<dbReference type="Gene3D" id="3.30.1550.10">
    <property type="entry name" value="Ribosomal protein L11/L12, N-terminal domain"/>
    <property type="match status" value="1"/>
</dbReference>
<dbReference type="HAMAP" id="MF_00736">
    <property type="entry name" value="Ribosomal_uL11"/>
    <property type="match status" value="1"/>
</dbReference>
<dbReference type="InterPro" id="IPR000911">
    <property type="entry name" value="Ribosomal_uL11"/>
</dbReference>
<dbReference type="InterPro" id="IPR006519">
    <property type="entry name" value="Ribosomal_uL11_bac-typ"/>
</dbReference>
<dbReference type="InterPro" id="IPR020783">
    <property type="entry name" value="Ribosomal_uL11_C"/>
</dbReference>
<dbReference type="InterPro" id="IPR036769">
    <property type="entry name" value="Ribosomal_uL11_C_sf"/>
</dbReference>
<dbReference type="InterPro" id="IPR020785">
    <property type="entry name" value="Ribosomal_uL11_CS"/>
</dbReference>
<dbReference type="InterPro" id="IPR020784">
    <property type="entry name" value="Ribosomal_uL11_N"/>
</dbReference>
<dbReference type="InterPro" id="IPR036796">
    <property type="entry name" value="Ribosomal_uL11_N_sf"/>
</dbReference>
<dbReference type="NCBIfam" id="TIGR01632">
    <property type="entry name" value="L11_bact"/>
    <property type="match status" value="1"/>
</dbReference>
<dbReference type="PANTHER" id="PTHR11661">
    <property type="entry name" value="60S RIBOSOMAL PROTEIN L12"/>
    <property type="match status" value="1"/>
</dbReference>
<dbReference type="PANTHER" id="PTHR11661:SF1">
    <property type="entry name" value="LARGE RIBOSOMAL SUBUNIT PROTEIN UL11M"/>
    <property type="match status" value="1"/>
</dbReference>
<dbReference type="Pfam" id="PF00298">
    <property type="entry name" value="Ribosomal_L11"/>
    <property type="match status" value="1"/>
</dbReference>
<dbReference type="Pfam" id="PF03946">
    <property type="entry name" value="Ribosomal_L11_N"/>
    <property type="match status" value="1"/>
</dbReference>
<dbReference type="SMART" id="SM00649">
    <property type="entry name" value="RL11"/>
    <property type="match status" value="1"/>
</dbReference>
<dbReference type="SUPFAM" id="SSF54747">
    <property type="entry name" value="Ribosomal L11/L12e N-terminal domain"/>
    <property type="match status" value="1"/>
</dbReference>
<dbReference type="SUPFAM" id="SSF46906">
    <property type="entry name" value="Ribosomal protein L11, C-terminal domain"/>
    <property type="match status" value="1"/>
</dbReference>
<dbReference type="PROSITE" id="PS00359">
    <property type="entry name" value="RIBOSOMAL_L11"/>
    <property type="match status" value="1"/>
</dbReference>
<reference key="1">
    <citation type="submission" date="2007-11" db="EMBL/GenBank/DDBJ databases">
        <authorList>
            <consortium name="The Salmonella enterica serovar Arizonae Genome Sequencing Project"/>
            <person name="McClelland M."/>
            <person name="Sanderson E.K."/>
            <person name="Porwollik S."/>
            <person name="Spieth J."/>
            <person name="Clifton W.S."/>
            <person name="Fulton R."/>
            <person name="Chunyan W."/>
            <person name="Wollam A."/>
            <person name="Shah N."/>
            <person name="Pepin K."/>
            <person name="Bhonagiri V."/>
            <person name="Nash W."/>
            <person name="Johnson M."/>
            <person name="Thiruvilangam P."/>
            <person name="Wilson R."/>
        </authorList>
    </citation>
    <scope>NUCLEOTIDE SEQUENCE [LARGE SCALE GENOMIC DNA]</scope>
    <source>
        <strain>ATCC BAA-731 / CDC346-86 / RSK2980</strain>
    </source>
</reference>
<feature type="chain" id="PRO_1000083401" description="Large ribosomal subunit protein uL11">
    <location>
        <begin position="1"/>
        <end position="142"/>
    </location>
</feature>
<sequence length="142" mass="14875">MAKKVQAYVKLQVAAGMANPSPPVGPALGQQGVNIMEFCKAFNAKTDSIEKGLPIPVVITVYADRSFTFVTKTPPAAVLLKKAAGIKSGSGKPNKDKVGKISRAQLQEIAQTKAADMTGADIEAMTRSIEGTARSMGLVVED</sequence>